<reference key="1">
    <citation type="journal article" date="2001" name="Proc. Natl. Acad. Sci. U.S.A.">
        <title>The complete genome of the crenarchaeon Sulfolobus solfataricus P2.</title>
        <authorList>
            <person name="She Q."/>
            <person name="Singh R.K."/>
            <person name="Confalonieri F."/>
            <person name="Zivanovic Y."/>
            <person name="Allard G."/>
            <person name="Awayez M.J."/>
            <person name="Chan-Weiher C.C.-Y."/>
            <person name="Clausen I.G."/>
            <person name="Curtis B.A."/>
            <person name="De Moors A."/>
            <person name="Erauso G."/>
            <person name="Fletcher C."/>
            <person name="Gordon P.M.K."/>
            <person name="Heikamp-de Jong I."/>
            <person name="Jeffries A.C."/>
            <person name="Kozera C.J."/>
            <person name="Medina N."/>
            <person name="Peng X."/>
            <person name="Thi-Ngoc H.P."/>
            <person name="Redder P."/>
            <person name="Schenk M.E."/>
            <person name="Theriault C."/>
            <person name="Tolstrup N."/>
            <person name="Charlebois R.L."/>
            <person name="Doolittle W.F."/>
            <person name="Duguet M."/>
            <person name="Gaasterland T."/>
            <person name="Garrett R.A."/>
            <person name="Ragan M.A."/>
            <person name="Sensen C.W."/>
            <person name="Van der Oost J."/>
        </authorList>
    </citation>
    <scope>NUCLEOTIDE SEQUENCE [LARGE SCALE GENOMIC DNA]</scope>
    <source>
        <strain>ATCC 35092 / DSM 1617 / JCM 11322 / P2</strain>
    </source>
</reference>
<gene>
    <name type="ordered locus">SSO0267</name>
</gene>
<protein>
    <recommendedName>
        <fullName evidence="1">tRNA (cytidine(56)-2'-O)-methyltransferase</fullName>
        <ecNumber evidence="1">2.1.1.206</ecNumber>
    </recommendedName>
    <alternativeName>
        <fullName evidence="1">tRNA ribose 2'-O-methyltransferase aTrm56</fullName>
    </alternativeName>
</protein>
<sequence length="160" mass="18185">MTTHVILVARAFGAKGVYIEGKDEKMVKSILKVIDSWGGSSYFLVKEIENGKSIVNEWKEKGGTIIHLTMYGININDFQDRFEKIKYPLLIIVGAEKVEGWYYHNADYNIAIGNQPHSEVAALAIFLDRIYKGRELYMEFEDAKIKILPQKAGKKVIRSG</sequence>
<evidence type="ECO:0000255" key="1">
    <source>
        <dbReference type="HAMAP-Rule" id="MF_00077"/>
    </source>
</evidence>
<dbReference type="EC" id="2.1.1.206" evidence="1"/>
<dbReference type="EMBL" id="AE006641">
    <property type="protein sequence ID" value="AAK40606.1"/>
    <property type="molecule type" value="Genomic_DNA"/>
</dbReference>
<dbReference type="PIR" id="G90168">
    <property type="entry name" value="G90168"/>
</dbReference>
<dbReference type="RefSeq" id="WP_009990542.1">
    <property type="nucleotide sequence ID" value="NC_002754.1"/>
</dbReference>
<dbReference type="SMR" id="Q980M4"/>
<dbReference type="STRING" id="273057.SSO0267"/>
<dbReference type="PaxDb" id="273057-SSO0267"/>
<dbReference type="EnsemblBacteria" id="AAK40606">
    <property type="protein sequence ID" value="AAK40606"/>
    <property type="gene ID" value="SSO0267"/>
</dbReference>
<dbReference type="KEGG" id="sso:SSO0267"/>
<dbReference type="PATRIC" id="fig|273057.12.peg.262"/>
<dbReference type="eggNOG" id="arCOG01857">
    <property type="taxonomic scope" value="Archaea"/>
</dbReference>
<dbReference type="HOGENOM" id="CLU_123709_0_0_2"/>
<dbReference type="InParanoid" id="Q980M4"/>
<dbReference type="PhylomeDB" id="Q980M4"/>
<dbReference type="Proteomes" id="UP000001974">
    <property type="component" value="Chromosome"/>
</dbReference>
<dbReference type="GO" id="GO:0005737">
    <property type="term" value="C:cytoplasm"/>
    <property type="evidence" value="ECO:0007669"/>
    <property type="project" value="UniProtKB-SubCell"/>
</dbReference>
<dbReference type="GO" id="GO:0106059">
    <property type="term" value="F:tRNA (cytidine(56)-2'-O)-methyltransferase activity"/>
    <property type="evidence" value="ECO:0007669"/>
    <property type="project" value="UniProtKB-EC"/>
</dbReference>
<dbReference type="GO" id="GO:0002128">
    <property type="term" value="P:tRNA nucleoside ribose methylation"/>
    <property type="evidence" value="ECO:0007669"/>
    <property type="project" value="UniProtKB-UniRule"/>
</dbReference>
<dbReference type="Gene3D" id="3.40.1280.10">
    <property type="match status" value="1"/>
</dbReference>
<dbReference type="HAMAP" id="MF_00077">
    <property type="entry name" value="tRNA_methyltr_aTrm56"/>
    <property type="match status" value="1"/>
</dbReference>
<dbReference type="InterPro" id="IPR029028">
    <property type="entry name" value="Alpha/beta_knot_MTases"/>
</dbReference>
<dbReference type="InterPro" id="IPR029026">
    <property type="entry name" value="tRNA_m1G_MTases_N"/>
</dbReference>
<dbReference type="InterPro" id="IPR002845">
    <property type="entry name" value="tRNA_mtfrase_aTrm56"/>
</dbReference>
<dbReference type="PANTHER" id="PTHR42197">
    <property type="entry name" value="TRNA (CYTIDINE(56)-2'-O)-METHYLTRANSFERASE"/>
    <property type="match status" value="1"/>
</dbReference>
<dbReference type="PANTHER" id="PTHR42197:SF1">
    <property type="entry name" value="TRNA (CYTIDINE(56)-2'-O)-METHYLTRANSFERASE"/>
    <property type="match status" value="1"/>
</dbReference>
<dbReference type="Pfam" id="PF01994">
    <property type="entry name" value="Trm56"/>
    <property type="match status" value="1"/>
</dbReference>
<dbReference type="PIRSF" id="PIRSF016123">
    <property type="entry name" value="UCP016123"/>
    <property type="match status" value="1"/>
</dbReference>
<dbReference type="SUPFAM" id="SSF75217">
    <property type="entry name" value="alpha/beta knot"/>
    <property type="match status" value="1"/>
</dbReference>
<name>TRM56_SACS2</name>
<proteinExistence type="inferred from homology"/>
<comment type="function">
    <text evidence="1">Specifically catalyzes the AdoMet-dependent 2'-O-ribose methylation of cytidine at position 56 in tRNAs.</text>
</comment>
<comment type="catalytic activity">
    <reaction evidence="1">
        <text>cytidine(56) in tRNA + S-adenosyl-L-methionine = 2'-O-methylcytidine(56) in tRNA + S-adenosyl-L-homocysteine + H(+)</text>
        <dbReference type="Rhea" id="RHEA:42968"/>
        <dbReference type="Rhea" id="RHEA-COMP:10308"/>
        <dbReference type="Rhea" id="RHEA-COMP:10309"/>
        <dbReference type="ChEBI" id="CHEBI:15378"/>
        <dbReference type="ChEBI" id="CHEBI:57856"/>
        <dbReference type="ChEBI" id="CHEBI:59789"/>
        <dbReference type="ChEBI" id="CHEBI:74495"/>
        <dbReference type="ChEBI" id="CHEBI:82748"/>
        <dbReference type="EC" id="2.1.1.206"/>
    </reaction>
</comment>
<comment type="subunit">
    <text evidence="1">Homodimer.</text>
</comment>
<comment type="subcellular location">
    <subcellularLocation>
        <location evidence="1">Cytoplasm</location>
    </subcellularLocation>
</comment>
<comment type="similarity">
    <text evidence="1">Belongs to the aTrm56 family.</text>
</comment>
<organism>
    <name type="scientific">Saccharolobus solfataricus (strain ATCC 35092 / DSM 1617 / JCM 11322 / P2)</name>
    <name type="common">Sulfolobus solfataricus</name>
    <dbReference type="NCBI Taxonomy" id="273057"/>
    <lineage>
        <taxon>Archaea</taxon>
        <taxon>Thermoproteota</taxon>
        <taxon>Thermoprotei</taxon>
        <taxon>Sulfolobales</taxon>
        <taxon>Sulfolobaceae</taxon>
        <taxon>Saccharolobus</taxon>
    </lineage>
</organism>
<accession>Q980M4</accession>
<feature type="chain" id="PRO_0000365321" description="tRNA (cytidine(56)-2'-O)-methyltransferase">
    <location>
        <begin position="1"/>
        <end position="160"/>
    </location>
</feature>
<feature type="binding site" evidence="1">
    <location>
        <position position="68"/>
    </location>
    <ligand>
        <name>S-adenosyl-L-methionine</name>
        <dbReference type="ChEBI" id="CHEBI:59789"/>
    </ligand>
</feature>
<feature type="binding site" evidence="1">
    <location>
        <begin position="94"/>
        <end position="98"/>
    </location>
    <ligand>
        <name>S-adenosyl-L-methionine</name>
        <dbReference type="ChEBI" id="CHEBI:59789"/>
    </ligand>
</feature>
<feature type="binding site" evidence="1">
    <location>
        <begin position="112"/>
        <end position="119"/>
    </location>
    <ligand>
        <name>S-adenosyl-L-methionine</name>
        <dbReference type="ChEBI" id="CHEBI:59789"/>
    </ligand>
</feature>
<keyword id="KW-0963">Cytoplasm</keyword>
<keyword id="KW-0489">Methyltransferase</keyword>
<keyword id="KW-1185">Reference proteome</keyword>
<keyword id="KW-0949">S-adenosyl-L-methionine</keyword>
<keyword id="KW-0808">Transferase</keyword>
<keyword id="KW-0819">tRNA processing</keyword>